<comment type="function">
    <text evidence="3">Plays a pivotal role in regulating the expression of other pair-rule genes such as eve, ftz, and h.</text>
</comment>
<comment type="interaction">
    <interactant intactId="EBI-868309">
        <id>P22814</id>
    </interactant>
    <interactant intactId="EBI-148540">
        <id>Q24039</id>
        <label>Bro</label>
    </interactant>
    <organismsDiffer>false</organismsDiffer>
    <experiments>6</experiments>
</comment>
<comment type="subcellular location">
    <subcellularLocation>
        <location evidence="1 3">Nucleus</location>
    </subcellularLocation>
</comment>
<comment type="tissue specificity">
    <text evidence="3">Expressed in embryonic central and peripheral nervous system.</text>
</comment>
<comment type="developmental stage">
    <text evidence="3">Most abundantly expressed at the blastoderm stage of embryogenesis.</text>
</comment>
<reference key="1">
    <citation type="journal article" date="1990" name="Genes Dev.">
        <title>The Drosophila segmentation gene runt encodes a novel nuclear regulatory protein that is also expressed in the developing nervous system.</title>
        <authorList>
            <person name="Kania M.A."/>
            <person name="Bonner A.S."/>
            <person name="Duffy J.B."/>
            <person name="Gergen J.P."/>
        </authorList>
    </citation>
    <scope>NUCLEOTIDE SEQUENCE [MRNA]</scope>
    <scope>FUNCTION</scope>
    <scope>SUBCELLULAR LOCATION</scope>
    <scope>TISSUE SPECIFICITY</scope>
    <scope>DEVELOPMENTAL STAGE</scope>
    <source>
        <tissue>Embryo</tissue>
    </source>
</reference>
<reference key="2">
    <citation type="journal article" date="1999" name="Mol. Biol. Evol.">
        <title>Nucleotide variation at the runt locus in Drosophila melanogaster and Drosophila simulans.</title>
        <authorList>
            <person name="Labate J.A."/>
            <person name="Biermann C.H."/>
            <person name="Eanes W.F."/>
        </authorList>
    </citation>
    <scope>NUCLEOTIDE SEQUENCE [GENOMIC DNA]</scope>
    <source>
        <strain>OK13</strain>
        <strain>OK17</strain>
        <strain>OK5</strain>
        <strain>OK94</strain>
        <strain>Z11</strain>
        <strain>Z16</strain>
        <strain>Z27</strain>
        <strain>Z42</strain>
        <strain>Z55</strain>
        <strain>Z64</strain>
        <strain>Z74</strain>
    </source>
</reference>
<reference key="3">
    <citation type="journal article" date="2000" name="Science">
        <title>The genome sequence of Drosophila melanogaster.</title>
        <authorList>
            <person name="Adams M.D."/>
            <person name="Celniker S.E."/>
            <person name="Holt R.A."/>
            <person name="Evans C.A."/>
            <person name="Gocayne J.D."/>
            <person name="Amanatides P.G."/>
            <person name="Scherer S.E."/>
            <person name="Li P.W."/>
            <person name="Hoskins R.A."/>
            <person name="Galle R.F."/>
            <person name="George R.A."/>
            <person name="Lewis S.E."/>
            <person name="Richards S."/>
            <person name="Ashburner M."/>
            <person name="Henderson S.N."/>
            <person name="Sutton G.G."/>
            <person name="Wortman J.R."/>
            <person name="Yandell M.D."/>
            <person name="Zhang Q."/>
            <person name="Chen L.X."/>
            <person name="Brandon R.C."/>
            <person name="Rogers Y.-H.C."/>
            <person name="Blazej R.G."/>
            <person name="Champe M."/>
            <person name="Pfeiffer B.D."/>
            <person name="Wan K.H."/>
            <person name="Doyle C."/>
            <person name="Baxter E.G."/>
            <person name="Helt G."/>
            <person name="Nelson C.R."/>
            <person name="Miklos G.L.G."/>
            <person name="Abril J.F."/>
            <person name="Agbayani A."/>
            <person name="An H.-J."/>
            <person name="Andrews-Pfannkoch C."/>
            <person name="Baldwin D."/>
            <person name="Ballew R.M."/>
            <person name="Basu A."/>
            <person name="Baxendale J."/>
            <person name="Bayraktaroglu L."/>
            <person name="Beasley E.M."/>
            <person name="Beeson K.Y."/>
            <person name="Benos P.V."/>
            <person name="Berman B.P."/>
            <person name="Bhandari D."/>
            <person name="Bolshakov S."/>
            <person name="Borkova D."/>
            <person name="Botchan M.R."/>
            <person name="Bouck J."/>
            <person name="Brokstein P."/>
            <person name="Brottier P."/>
            <person name="Burtis K.C."/>
            <person name="Busam D.A."/>
            <person name="Butler H."/>
            <person name="Cadieu E."/>
            <person name="Center A."/>
            <person name="Chandra I."/>
            <person name="Cherry J.M."/>
            <person name="Cawley S."/>
            <person name="Dahlke C."/>
            <person name="Davenport L.B."/>
            <person name="Davies P."/>
            <person name="de Pablos B."/>
            <person name="Delcher A."/>
            <person name="Deng Z."/>
            <person name="Mays A.D."/>
            <person name="Dew I."/>
            <person name="Dietz S.M."/>
            <person name="Dodson K."/>
            <person name="Doup L.E."/>
            <person name="Downes M."/>
            <person name="Dugan-Rocha S."/>
            <person name="Dunkov B.C."/>
            <person name="Dunn P."/>
            <person name="Durbin K.J."/>
            <person name="Evangelista C.C."/>
            <person name="Ferraz C."/>
            <person name="Ferriera S."/>
            <person name="Fleischmann W."/>
            <person name="Fosler C."/>
            <person name="Gabrielian A.E."/>
            <person name="Garg N.S."/>
            <person name="Gelbart W.M."/>
            <person name="Glasser K."/>
            <person name="Glodek A."/>
            <person name="Gong F."/>
            <person name="Gorrell J.H."/>
            <person name="Gu Z."/>
            <person name="Guan P."/>
            <person name="Harris M."/>
            <person name="Harris N.L."/>
            <person name="Harvey D.A."/>
            <person name="Heiman T.J."/>
            <person name="Hernandez J.R."/>
            <person name="Houck J."/>
            <person name="Hostin D."/>
            <person name="Houston K.A."/>
            <person name="Howland T.J."/>
            <person name="Wei M.-H."/>
            <person name="Ibegwam C."/>
            <person name="Jalali M."/>
            <person name="Kalush F."/>
            <person name="Karpen G.H."/>
            <person name="Ke Z."/>
            <person name="Kennison J.A."/>
            <person name="Ketchum K.A."/>
            <person name="Kimmel B.E."/>
            <person name="Kodira C.D."/>
            <person name="Kraft C.L."/>
            <person name="Kravitz S."/>
            <person name="Kulp D."/>
            <person name="Lai Z."/>
            <person name="Lasko P."/>
            <person name="Lei Y."/>
            <person name="Levitsky A.A."/>
            <person name="Li J.H."/>
            <person name="Li Z."/>
            <person name="Liang Y."/>
            <person name="Lin X."/>
            <person name="Liu X."/>
            <person name="Mattei B."/>
            <person name="McIntosh T.C."/>
            <person name="McLeod M.P."/>
            <person name="McPherson D."/>
            <person name="Merkulov G."/>
            <person name="Milshina N.V."/>
            <person name="Mobarry C."/>
            <person name="Morris J."/>
            <person name="Moshrefi A."/>
            <person name="Mount S.M."/>
            <person name="Moy M."/>
            <person name="Murphy B."/>
            <person name="Murphy L."/>
            <person name="Muzny D.M."/>
            <person name="Nelson D.L."/>
            <person name="Nelson D.R."/>
            <person name="Nelson K.A."/>
            <person name="Nixon K."/>
            <person name="Nusskern D.R."/>
            <person name="Pacleb J.M."/>
            <person name="Palazzolo M."/>
            <person name="Pittman G.S."/>
            <person name="Pan S."/>
            <person name="Pollard J."/>
            <person name="Puri V."/>
            <person name="Reese M.G."/>
            <person name="Reinert K."/>
            <person name="Remington K."/>
            <person name="Saunders R.D.C."/>
            <person name="Scheeler F."/>
            <person name="Shen H."/>
            <person name="Shue B.C."/>
            <person name="Siden-Kiamos I."/>
            <person name="Simpson M."/>
            <person name="Skupski M.P."/>
            <person name="Smith T.J."/>
            <person name="Spier E."/>
            <person name="Spradling A.C."/>
            <person name="Stapleton M."/>
            <person name="Strong R."/>
            <person name="Sun E."/>
            <person name="Svirskas R."/>
            <person name="Tector C."/>
            <person name="Turner R."/>
            <person name="Venter E."/>
            <person name="Wang A.H."/>
            <person name="Wang X."/>
            <person name="Wang Z.-Y."/>
            <person name="Wassarman D.A."/>
            <person name="Weinstock G.M."/>
            <person name="Weissenbach J."/>
            <person name="Williams S.M."/>
            <person name="Woodage T."/>
            <person name="Worley K.C."/>
            <person name="Wu D."/>
            <person name="Yang S."/>
            <person name="Yao Q.A."/>
            <person name="Ye J."/>
            <person name="Yeh R.-F."/>
            <person name="Zaveri J.S."/>
            <person name="Zhan M."/>
            <person name="Zhang G."/>
            <person name="Zhao Q."/>
            <person name="Zheng L."/>
            <person name="Zheng X.H."/>
            <person name="Zhong F.N."/>
            <person name="Zhong W."/>
            <person name="Zhou X."/>
            <person name="Zhu S.C."/>
            <person name="Zhu X."/>
            <person name="Smith H.O."/>
            <person name="Gibbs R.A."/>
            <person name="Myers E.W."/>
            <person name="Rubin G.M."/>
            <person name="Venter J.C."/>
        </authorList>
    </citation>
    <scope>NUCLEOTIDE SEQUENCE [LARGE SCALE GENOMIC DNA]</scope>
    <source>
        <strain>Berkeley</strain>
    </source>
</reference>
<reference key="4">
    <citation type="journal article" date="2002" name="Genome Biol.">
        <title>Annotation of the Drosophila melanogaster euchromatic genome: a systematic review.</title>
        <authorList>
            <person name="Misra S."/>
            <person name="Crosby M.A."/>
            <person name="Mungall C.J."/>
            <person name="Matthews B.B."/>
            <person name="Campbell K.S."/>
            <person name="Hradecky P."/>
            <person name="Huang Y."/>
            <person name="Kaminker J.S."/>
            <person name="Millburn G.H."/>
            <person name="Prochnik S.E."/>
            <person name="Smith C.D."/>
            <person name="Tupy J.L."/>
            <person name="Whitfield E.J."/>
            <person name="Bayraktaroglu L."/>
            <person name="Berman B.P."/>
            <person name="Bettencourt B.R."/>
            <person name="Celniker S.E."/>
            <person name="de Grey A.D.N.J."/>
            <person name="Drysdale R.A."/>
            <person name="Harris N.L."/>
            <person name="Richter J."/>
            <person name="Russo S."/>
            <person name="Schroeder A.J."/>
            <person name="Shu S.Q."/>
            <person name="Stapleton M."/>
            <person name="Yamada C."/>
            <person name="Ashburner M."/>
            <person name="Gelbart W.M."/>
            <person name="Rubin G.M."/>
            <person name="Lewis S.E."/>
        </authorList>
    </citation>
    <scope>GENOME REANNOTATION</scope>
    <source>
        <strain>Berkeley</strain>
    </source>
</reference>
<reference key="5">
    <citation type="submission" date="2006-10" db="EMBL/GenBank/DDBJ databases">
        <authorList>
            <person name="Stapleton M."/>
            <person name="Brokstein P."/>
            <person name="Hong L."/>
            <person name="Agbayani A."/>
            <person name="Carlson J.W."/>
            <person name="Champe M."/>
            <person name="Chavez C."/>
            <person name="Dorsett V."/>
            <person name="Dresnek D."/>
            <person name="Farfan D."/>
            <person name="Frise E."/>
            <person name="George R.A."/>
            <person name="Gonzalez M."/>
            <person name="Guarin H."/>
            <person name="Kapadia B."/>
            <person name="Kronmiller B."/>
            <person name="Li P.W."/>
            <person name="Liao G."/>
            <person name="Miranda A."/>
            <person name="Mungall C.J."/>
            <person name="Nunoo J."/>
            <person name="Pacleb J.M."/>
            <person name="Paragas V."/>
            <person name="Park S."/>
            <person name="Patel S."/>
            <person name="Phouanenavong S."/>
            <person name="Wan K.H."/>
            <person name="Yu C."/>
            <person name="Lewis S.E."/>
            <person name="Rubin G.M."/>
            <person name="Celniker S.E."/>
        </authorList>
    </citation>
    <scope>NUCLEOTIDE SEQUENCE [LARGE SCALE MRNA]</scope>
    <source>
        <strain>Berkeley</strain>
        <tissue>Head</tissue>
    </source>
</reference>
<reference key="6">
    <citation type="journal article" date="2004" name="Mol. Biol. Evol.">
        <title>Non-African populations of Drosophila melanogaster have a unique origin.</title>
        <authorList>
            <person name="Baudry E."/>
            <person name="Viginier B."/>
            <person name="Veuille M."/>
        </authorList>
    </citation>
    <scope>NUCLEOTIDE SEQUENCE [GENOMIC DNA] OF 216-275</scope>
    <source>
        <strain>Ara1</strain>
        <strain>Ara10</strain>
        <strain>Ara11</strain>
        <strain>Ara12</strain>
        <strain>Ara13</strain>
        <strain>Ara15</strain>
        <strain>Ara2</strain>
        <strain>Ara3</strain>
        <strain>Ara4</strain>
        <strain>Ara5</strain>
        <strain>Ara6</strain>
        <strain>Ara7</strain>
        <strain>Ara8</strain>
        <strain>Ara9</strain>
        <strain>Cog1</strain>
        <strain>Cog11</strain>
        <strain>Cog12</strain>
        <strain>Cog13</strain>
        <strain>Cog14</strain>
        <strain>Cog15</strain>
        <strain>Cog2</strain>
        <strain>Cog3</strain>
        <strain>Cog4</strain>
        <strain>Cog5</strain>
        <strain>Cog6</strain>
        <strain>Cog7</strain>
        <strain>Cog8</strain>
        <strain>Cog9</strain>
        <strain>Gh51</strain>
        <strain>Gh52</strain>
        <strain>Gh53</strain>
        <strain>Gh54</strain>
        <strain>Gh55</strain>
        <strain>Gh56</strain>
        <strain>Gh57</strain>
        <strain>Gh58</strain>
        <strain>Gh59</strain>
        <strain>Gh60</strain>
        <strain>Gh61</strain>
        <strain>Gh62</strain>
        <strain>Gh63</strain>
        <strain>Gh65</strain>
        <strain>KN1</strain>
        <strain>KN10</strain>
        <strain>KN11</strain>
        <strain>KN12</strain>
        <strain>KN13</strain>
        <strain>KN15</strain>
        <strain>KN2</strain>
        <strain>KN3</strain>
        <strain>KN4</strain>
        <strain>KN5</strain>
        <strain>KN6</strain>
        <strain>KN7</strain>
        <strain>KN8</strain>
        <strain>KN9</strain>
        <strain>Mad1</strain>
        <strain>Mad10</strain>
        <strain>Mad11</strain>
        <strain>Mad13</strain>
        <strain>Mad14</strain>
        <strain>Mad17</strain>
        <strain>Mad2</strain>
        <strain>Mad3</strain>
        <strain>Mad4</strain>
        <strain>Mad5</strain>
        <strain>Mad6</strain>
        <strain>Mad7</strain>
        <strain>Mad8</strain>
        <strain>Mad9</strain>
        <strain>Mif1</strain>
        <strain>Mif10</strain>
        <strain>Mif11</strain>
        <strain>Mif12</strain>
        <strain>Mif13</strain>
        <strain>Mif15</strain>
        <strain>Mif16</strain>
        <strain>Mif2</strain>
        <strain>Mif3</strain>
        <strain>Mif4</strain>
        <strain>Mif6</strain>
        <strain>Mif7</strain>
        <strain>Mif8</strain>
        <strain>Mif9</strain>
        <strain>Nd1</strain>
        <strain>Nd10</strain>
        <strain>Nd11</strain>
        <strain>Nd12</strain>
        <strain>Nd13</strain>
        <strain>Nd14</strain>
        <strain>Nd2</strain>
        <strain>Nd3</strain>
        <strain>Nd4</strain>
        <strain>Nd5</strain>
        <strain>Nd6</strain>
        <strain>Nd7</strain>
        <strain>Nd8</strain>
        <strain>Nd9</strain>
        <strain>Nia1</strain>
        <strain>Nia10</strain>
        <strain>Nia11</strain>
        <strain>Nia13</strain>
        <strain>Nia16</strain>
        <strain>Nia17</strain>
        <strain>Nia18</strain>
        <strain>Nia2</strain>
        <strain>Nia20</strain>
        <strain>Nia21</strain>
        <strain>Nia22</strain>
        <strain>Nia3</strain>
        <strain>Nia6</strain>
        <strain>Nia9</strain>
        <strain>Pe1</strain>
        <strain>Pe12</strain>
        <strain>Pe13</strain>
        <strain>Pe14</strain>
        <strain>Pe15</strain>
        <strain>Pe16</strain>
        <strain>Pe17</strain>
        <strain>Pe18</strain>
        <strain>Pe19</strain>
        <strain>Pe2</strain>
        <strain>Pe4</strain>
        <strain>Pe7</strain>
        <strain>Pe8</strain>
        <strain>Pe9</strain>
        <strain>USA1</strain>
        <strain>USA10</strain>
        <strain>USA11</strain>
        <strain>USA12</strain>
        <strain>USA13</strain>
        <strain>USA14</strain>
        <strain>USA2</strain>
        <strain>USA3</strain>
        <strain>USA4</strain>
        <strain>USA5</strain>
        <strain>USA6</strain>
        <strain>USA7</strain>
        <strain>USA8</strain>
        <strain>USA9</strain>
        <strain>Z12</strain>
        <strain>Z121</strain>
        <strain>Z145</strain>
        <strain>Z147</strain>
        <strain>Z18</strain>
        <strain>Z27</strain>
        <strain>Z30</strain>
        <strain>Z32</strain>
        <strain>Z33</strain>
        <strain>Z422</strain>
        <strain>Z53</strain>
        <strain>Z67</strain>
        <strain>Z75</strain>
    </source>
</reference>
<reference key="7">
    <citation type="journal article" date="1992" name="Nature">
        <title>Leukaemia/Drosophila homology.</title>
        <authorList>
            <person name="Daga A."/>
            <person name="Tighe J.E."/>
            <person name="Calabi F."/>
        </authorList>
    </citation>
    <scope>SIMILARITY TO AML1</scope>
</reference>
<sequence length="510" mass="53209">MHLPAGPTMVANNTQVLAAAAAAAAAAAAAVAQGPGPQQSSNATTASAIAINPAQSLANTSTHSASSTGSSTPDLSTNNTSSSSNATTSPQNSAKMPSSMTDMFASLHEMLQEYHGELAQTGSPSILCSALPNHWRSNKSLPGAFKVIALDDVPDGTLVSIKCGNDENYCGELRNCTTTMKNQVAKFNDLRFVGRSGRGKSFTLTITIATYPVQIASYSKAIKVTVDGPREPRSKQSYGYPHPGAFNPFMLNPAWLDAAYMTYGYADYFRHQAAAQAAQVHHPALAKSSASSVSPNPNPSVATSSSSAVQPSEYPHPAAAVAAAAGQPAAMMPSPPGAAPATPYAIPQFPFNHVAAAAAAKAATPHAFHPYNFAAAAGLRARNAALHHQSEPVHVSPASSRPSSSSPTQQHVLLKLNTSIETSSIHEQSASDGDSDDEQIDVVKSEFDLDKSLDVAPLRMRCDLKAPSAMKPLYHESGPGAVANSRQPSPETTTKIKSAAVQQKTVWRPY</sequence>
<organism>
    <name type="scientific">Drosophila melanogaster</name>
    <name type="common">Fruit fly</name>
    <dbReference type="NCBI Taxonomy" id="7227"/>
    <lineage>
        <taxon>Eukaryota</taxon>
        <taxon>Metazoa</taxon>
        <taxon>Ecdysozoa</taxon>
        <taxon>Arthropoda</taxon>
        <taxon>Hexapoda</taxon>
        <taxon>Insecta</taxon>
        <taxon>Pterygota</taxon>
        <taxon>Neoptera</taxon>
        <taxon>Endopterygota</taxon>
        <taxon>Diptera</taxon>
        <taxon>Brachycera</taxon>
        <taxon>Muscomorpha</taxon>
        <taxon>Ephydroidea</taxon>
        <taxon>Drosophilidae</taxon>
        <taxon>Drosophila</taxon>
        <taxon>Sophophora</taxon>
    </lineage>
</organism>
<gene>
    <name type="primary">run</name>
    <name type="ORF">CG1849</name>
</gene>
<keyword id="KW-0217">Developmental protein</keyword>
<keyword id="KW-0539">Nucleus</keyword>
<keyword id="KW-0562">Pair-rule protein</keyword>
<keyword id="KW-1185">Reference proteome</keyword>
<keyword id="KW-0709">Segmentation polarity protein</keyword>
<keyword id="KW-0804">Transcription</keyword>
<keyword id="KW-0805">Transcription regulation</keyword>
<accession>P22814</accession>
<accession>A0AVT9</accession>
<accession>O76551</accession>
<accession>Q6SD78</accession>
<accession>Q7KPD6</accession>
<accession>Q8MRF4</accession>
<accession>Q9TVG1</accession>
<accession>Q9TVZ7</accession>
<accession>Q9TZQ9</accession>
<accession>Q9TZR0</accession>
<accession>Q9VRB6</accession>
<feature type="chain" id="PRO_0000174664" description="Segmentation protein Runt">
    <location>
        <begin position="1"/>
        <end position="510"/>
    </location>
</feature>
<feature type="domain" description="Runt" evidence="1">
    <location>
        <begin position="106"/>
        <end position="234"/>
    </location>
</feature>
<feature type="region of interest" description="Disordered" evidence="2">
    <location>
        <begin position="58"/>
        <end position="98"/>
    </location>
</feature>
<feature type="region of interest" description="Disordered" evidence="2">
    <location>
        <begin position="288"/>
        <end position="313"/>
    </location>
</feature>
<feature type="region of interest" description="Disordered" evidence="2">
    <location>
        <begin position="385"/>
        <end position="410"/>
    </location>
</feature>
<feature type="region of interest" description="Disordered" evidence="2">
    <location>
        <begin position="471"/>
        <end position="510"/>
    </location>
</feature>
<feature type="compositionally biased region" description="Low complexity" evidence="2">
    <location>
        <begin position="58"/>
        <end position="93"/>
    </location>
</feature>
<feature type="compositionally biased region" description="Low complexity" evidence="2">
    <location>
        <begin position="396"/>
        <end position="407"/>
    </location>
</feature>
<feature type="compositionally biased region" description="Polar residues" evidence="2">
    <location>
        <begin position="484"/>
        <end position="510"/>
    </location>
</feature>
<feature type="sequence variant">
    <original>A</original>
    <variation>P</variation>
    <location>
        <position position="32"/>
    </location>
</feature>
<feature type="sequence variant" description="In strain: OK17, OK94, Z42, Z55, Z64 and Z74.">
    <original>T</original>
    <variation>A</variation>
    <location>
        <position position="44"/>
    </location>
</feature>
<feature type="sequence variant" description="In strain: OK94.">
    <original>P</original>
    <variation>S</variation>
    <location>
        <position position="315"/>
    </location>
</feature>
<feature type="sequence variant" description="In strain: Z27, OK13, OK5 and Z16.">
    <original>A</original>
    <variation>S</variation>
    <location>
        <position position="469"/>
    </location>
</feature>
<feature type="sequence conflict" description="In Ref. 1; CAA39817." evidence="4" ref="1">
    <location>
        <position position="18"/>
    </location>
</feature>
<feature type="sequence conflict" description="In Ref. 1; CAA39817." evidence="4" ref="1">
    <original>V</original>
    <variation>W</variation>
    <location>
        <position position="153"/>
    </location>
</feature>
<feature type="sequence conflict" description="In Ref. 5; AAM51942." evidence="4" ref="5">
    <original>EPRSKQ</original>
    <variation>DPR</variation>
    <location>
        <begin position="231"/>
        <end position="236"/>
    </location>
</feature>
<feature type="sequence conflict" description="In Ref. 1; CAA39817 and 2; AAC27776/AAC27777/AAC27778/AAC27779/AAC27780/AAC27781/AAC27782/AAC27783/AAC27784/AAC27785/AAC27786." evidence="4" ref="1 2">
    <original>A</original>
    <variation>S</variation>
    <location>
        <position position="329"/>
    </location>
</feature>
<proteinExistence type="evidence at protein level"/>
<dbReference type="EMBL" id="X56432">
    <property type="protein sequence ID" value="CAA39817.1"/>
    <property type="molecule type" value="mRNA"/>
</dbReference>
<dbReference type="EMBL" id="AF077070">
    <property type="protein sequence ID" value="AAC27776.1"/>
    <property type="molecule type" value="Genomic_DNA"/>
</dbReference>
<dbReference type="EMBL" id="AF077071">
    <property type="protein sequence ID" value="AAC27777.1"/>
    <property type="molecule type" value="Genomic_DNA"/>
</dbReference>
<dbReference type="EMBL" id="AF077072">
    <property type="protein sequence ID" value="AAC27778.1"/>
    <property type="molecule type" value="Genomic_DNA"/>
</dbReference>
<dbReference type="EMBL" id="AF077073">
    <property type="protein sequence ID" value="AAC27779.1"/>
    <property type="molecule type" value="Genomic_DNA"/>
</dbReference>
<dbReference type="EMBL" id="AF077074">
    <property type="protein sequence ID" value="AAC27780.1"/>
    <property type="molecule type" value="Genomic_DNA"/>
</dbReference>
<dbReference type="EMBL" id="AF077075">
    <property type="protein sequence ID" value="AAC27781.1"/>
    <property type="molecule type" value="Genomic_DNA"/>
</dbReference>
<dbReference type="EMBL" id="AF077076">
    <property type="protein sequence ID" value="AAC27782.1"/>
    <property type="molecule type" value="Genomic_DNA"/>
</dbReference>
<dbReference type="EMBL" id="AF077077">
    <property type="protein sequence ID" value="AAC27783.1"/>
    <property type="molecule type" value="Genomic_DNA"/>
</dbReference>
<dbReference type="EMBL" id="AF077078">
    <property type="protein sequence ID" value="AAC27784.1"/>
    <property type="molecule type" value="Genomic_DNA"/>
</dbReference>
<dbReference type="EMBL" id="AF077079">
    <property type="protein sequence ID" value="AAC27785.1"/>
    <property type="molecule type" value="Genomic_DNA"/>
</dbReference>
<dbReference type="EMBL" id="AF077080">
    <property type="protein sequence ID" value="AAC27786.1"/>
    <property type="molecule type" value="Genomic_DNA"/>
</dbReference>
<dbReference type="EMBL" id="AE014298">
    <property type="protein sequence ID" value="AAF50886.1"/>
    <property type="molecule type" value="Genomic_DNA"/>
</dbReference>
<dbReference type="EMBL" id="AY121615">
    <property type="protein sequence ID" value="AAM51942.2"/>
    <property type="molecule type" value="mRNA"/>
</dbReference>
<dbReference type="EMBL" id="BT029257">
    <property type="protein sequence ID" value="ABK30894.1"/>
    <property type="molecule type" value="mRNA"/>
</dbReference>
<dbReference type="EMBL" id="AY459923">
    <property type="protein sequence ID" value="AAS16109.1"/>
    <property type="molecule type" value="Genomic_DNA"/>
</dbReference>
<dbReference type="EMBL" id="AY459924">
    <property type="protein sequence ID" value="AAS16110.1"/>
    <property type="molecule type" value="Genomic_DNA"/>
</dbReference>
<dbReference type="EMBL" id="AY459925">
    <property type="protein sequence ID" value="AAS16111.1"/>
    <property type="molecule type" value="Genomic_DNA"/>
</dbReference>
<dbReference type="EMBL" id="AY459926">
    <property type="protein sequence ID" value="AAS16112.1"/>
    <property type="molecule type" value="Genomic_DNA"/>
</dbReference>
<dbReference type="EMBL" id="AY459927">
    <property type="protein sequence ID" value="AAS16113.1"/>
    <property type="molecule type" value="Genomic_DNA"/>
</dbReference>
<dbReference type="EMBL" id="AY459928">
    <property type="protein sequence ID" value="AAS16114.1"/>
    <property type="molecule type" value="Genomic_DNA"/>
</dbReference>
<dbReference type="EMBL" id="AY459929">
    <property type="protein sequence ID" value="AAS16115.1"/>
    <property type="molecule type" value="Genomic_DNA"/>
</dbReference>
<dbReference type="EMBL" id="AY459930">
    <property type="protein sequence ID" value="AAS16116.1"/>
    <property type="molecule type" value="Genomic_DNA"/>
</dbReference>
<dbReference type="EMBL" id="AY459931">
    <property type="protein sequence ID" value="AAS16117.1"/>
    <property type="molecule type" value="Genomic_DNA"/>
</dbReference>
<dbReference type="EMBL" id="AY459932">
    <property type="protein sequence ID" value="AAS16118.1"/>
    <property type="molecule type" value="Genomic_DNA"/>
</dbReference>
<dbReference type="EMBL" id="AY459933">
    <property type="protein sequence ID" value="AAS16119.1"/>
    <property type="molecule type" value="Genomic_DNA"/>
</dbReference>
<dbReference type="EMBL" id="AY459934">
    <property type="protein sequence ID" value="AAS16120.1"/>
    <property type="molecule type" value="Genomic_DNA"/>
</dbReference>
<dbReference type="EMBL" id="AY459935">
    <property type="protein sequence ID" value="AAS16121.1"/>
    <property type="molecule type" value="Genomic_DNA"/>
</dbReference>
<dbReference type="EMBL" id="AY459936">
    <property type="protein sequence ID" value="AAS16122.1"/>
    <property type="molecule type" value="Genomic_DNA"/>
</dbReference>
<dbReference type="EMBL" id="AY459937">
    <property type="protein sequence ID" value="AAS16123.1"/>
    <property type="molecule type" value="Genomic_DNA"/>
</dbReference>
<dbReference type="EMBL" id="AY459938">
    <property type="protein sequence ID" value="AAS16124.1"/>
    <property type="molecule type" value="Genomic_DNA"/>
</dbReference>
<dbReference type="EMBL" id="AY459939">
    <property type="protein sequence ID" value="AAS16125.1"/>
    <property type="molecule type" value="Genomic_DNA"/>
</dbReference>
<dbReference type="EMBL" id="AY459940">
    <property type="protein sequence ID" value="AAS16126.1"/>
    <property type="molecule type" value="Genomic_DNA"/>
</dbReference>
<dbReference type="EMBL" id="AY459941">
    <property type="protein sequence ID" value="AAS16127.1"/>
    <property type="molecule type" value="Genomic_DNA"/>
</dbReference>
<dbReference type="EMBL" id="AY459942">
    <property type="protein sequence ID" value="AAS16128.1"/>
    <property type="molecule type" value="Genomic_DNA"/>
</dbReference>
<dbReference type="EMBL" id="AY459943">
    <property type="protein sequence ID" value="AAS16129.1"/>
    <property type="molecule type" value="Genomic_DNA"/>
</dbReference>
<dbReference type="EMBL" id="AY459944">
    <property type="protein sequence ID" value="AAS16130.1"/>
    <property type="molecule type" value="Genomic_DNA"/>
</dbReference>
<dbReference type="EMBL" id="AY459945">
    <property type="protein sequence ID" value="AAS16131.1"/>
    <property type="molecule type" value="Genomic_DNA"/>
</dbReference>
<dbReference type="EMBL" id="AY459946">
    <property type="protein sequence ID" value="AAS16132.1"/>
    <property type="molecule type" value="Genomic_DNA"/>
</dbReference>
<dbReference type="EMBL" id="AY459947">
    <property type="protein sequence ID" value="AAS16133.1"/>
    <property type="molecule type" value="Genomic_DNA"/>
</dbReference>
<dbReference type="EMBL" id="AY459948">
    <property type="protein sequence ID" value="AAS16134.1"/>
    <property type="molecule type" value="Genomic_DNA"/>
</dbReference>
<dbReference type="EMBL" id="AY459949">
    <property type="protein sequence ID" value="AAS16135.1"/>
    <property type="molecule type" value="Genomic_DNA"/>
</dbReference>
<dbReference type="EMBL" id="AY459950">
    <property type="protein sequence ID" value="AAS16136.1"/>
    <property type="molecule type" value="Genomic_DNA"/>
</dbReference>
<dbReference type="EMBL" id="AY459951">
    <property type="protein sequence ID" value="AAS16137.1"/>
    <property type="molecule type" value="Genomic_DNA"/>
</dbReference>
<dbReference type="EMBL" id="AY459952">
    <property type="protein sequence ID" value="AAS16138.1"/>
    <property type="molecule type" value="Genomic_DNA"/>
</dbReference>
<dbReference type="EMBL" id="AY459953">
    <property type="protein sequence ID" value="AAS16139.1"/>
    <property type="molecule type" value="Genomic_DNA"/>
</dbReference>
<dbReference type="EMBL" id="AY459954">
    <property type="protein sequence ID" value="AAS16140.1"/>
    <property type="molecule type" value="Genomic_DNA"/>
</dbReference>
<dbReference type="EMBL" id="AY459955">
    <property type="protein sequence ID" value="AAS16141.1"/>
    <property type="molecule type" value="Genomic_DNA"/>
</dbReference>
<dbReference type="EMBL" id="AY459956">
    <property type="protein sequence ID" value="AAS16142.1"/>
    <property type="molecule type" value="Genomic_DNA"/>
</dbReference>
<dbReference type="EMBL" id="AY459957">
    <property type="protein sequence ID" value="AAS16143.1"/>
    <property type="molecule type" value="Genomic_DNA"/>
</dbReference>
<dbReference type="EMBL" id="AY459958">
    <property type="protein sequence ID" value="AAS16144.1"/>
    <property type="molecule type" value="Genomic_DNA"/>
</dbReference>
<dbReference type="EMBL" id="AY459959">
    <property type="protein sequence ID" value="AAS16145.1"/>
    <property type="molecule type" value="Genomic_DNA"/>
</dbReference>
<dbReference type="EMBL" id="AY459960">
    <property type="protein sequence ID" value="AAS16146.1"/>
    <property type="molecule type" value="Genomic_DNA"/>
</dbReference>
<dbReference type="EMBL" id="AY459961">
    <property type="protein sequence ID" value="AAS16147.1"/>
    <property type="molecule type" value="Genomic_DNA"/>
</dbReference>
<dbReference type="EMBL" id="AY459962">
    <property type="protein sequence ID" value="AAS16148.1"/>
    <property type="molecule type" value="Genomic_DNA"/>
</dbReference>
<dbReference type="EMBL" id="AY459963">
    <property type="protein sequence ID" value="AAS16149.1"/>
    <property type="molecule type" value="Genomic_DNA"/>
</dbReference>
<dbReference type="EMBL" id="AY459964">
    <property type="protein sequence ID" value="AAS16150.1"/>
    <property type="molecule type" value="Genomic_DNA"/>
</dbReference>
<dbReference type="EMBL" id="AY459965">
    <property type="protein sequence ID" value="AAS16151.1"/>
    <property type="molecule type" value="Genomic_DNA"/>
</dbReference>
<dbReference type="EMBL" id="AY459966">
    <property type="protein sequence ID" value="AAS16152.1"/>
    <property type="molecule type" value="Genomic_DNA"/>
</dbReference>
<dbReference type="EMBL" id="AY459967">
    <property type="protein sequence ID" value="AAS16153.1"/>
    <property type="molecule type" value="Genomic_DNA"/>
</dbReference>
<dbReference type="EMBL" id="AY459968">
    <property type="protein sequence ID" value="AAS16154.1"/>
    <property type="molecule type" value="Genomic_DNA"/>
</dbReference>
<dbReference type="EMBL" id="AY459969">
    <property type="protein sequence ID" value="AAS16155.1"/>
    <property type="molecule type" value="Genomic_DNA"/>
</dbReference>
<dbReference type="EMBL" id="AY459970">
    <property type="protein sequence ID" value="AAS16156.1"/>
    <property type="molecule type" value="Genomic_DNA"/>
</dbReference>
<dbReference type="EMBL" id="AY459971">
    <property type="protein sequence ID" value="AAS16157.1"/>
    <property type="molecule type" value="Genomic_DNA"/>
</dbReference>
<dbReference type="EMBL" id="AY459972">
    <property type="protein sequence ID" value="AAS16158.1"/>
    <property type="molecule type" value="Genomic_DNA"/>
</dbReference>
<dbReference type="EMBL" id="AY459973">
    <property type="protein sequence ID" value="AAS16159.1"/>
    <property type="molecule type" value="Genomic_DNA"/>
</dbReference>
<dbReference type="EMBL" id="AY459974">
    <property type="protein sequence ID" value="AAS16160.1"/>
    <property type="molecule type" value="Genomic_DNA"/>
</dbReference>
<dbReference type="EMBL" id="AY459975">
    <property type="protein sequence ID" value="AAS16161.1"/>
    <property type="molecule type" value="Genomic_DNA"/>
</dbReference>
<dbReference type="EMBL" id="AY459976">
    <property type="protein sequence ID" value="AAS16162.1"/>
    <property type="molecule type" value="Genomic_DNA"/>
</dbReference>
<dbReference type="EMBL" id="AY459977">
    <property type="protein sequence ID" value="AAS16163.1"/>
    <property type="molecule type" value="Genomic_DNA"/>
</dbReference>
<dbReference type="EMBL" id="AY459978">
    <property type="protein sequence ID" value="AAS16164.1"/>
    <property type="molecule type" value="Genomic_DNA"/>
</dbReference>
<dbReference type="EMBL" id="AY459979">
    <property type="protein sequence ID" value="AAS16165.1"/>
    <property type="molecule type" value="Genomic_DNA"/>
</dbReference>
<dbReference type="EMBL" id="AY459980">
    <property type="protein sequence ID" value="AAS16166.1"/>
    <property type="molecule type" value="Genomic_DNA"/>
</dbReference>
<dbReference type="EMBL" id="AY459981">
    <property type="protein sequence ID" value="AAS16167.1"/>
    <property type="molecule type" value="Genomic_DNA"/>
</dbReference>
<dbReference type="EMBL" id="AY459982">
    <property type="protein sequence ID" value="AAS16168.1"/>
    <property type="molecule type" value="Genomic_DNA"/>
</dbReference>
<dbReference type="EMBL" id="AY459983">
    <property type="protein sequence ID" value="AAS16169.1"/>
    <property type="molecule type" value="Genomic_DNA"/>
</dbReference>
<dbReference type="EMBL" id="AY459984">
    <property type="protein sequence ID" value="AAS16170.1"/>
    <property type="molecule type" value="Genomic_DNA"/>
</dbReference>
<dbReference type="EMBL" id="AY459985">
    <property type="protein sequence ID" value="AAS16171.1"/>
    <property type="molecule type" value="Genomic_DNA"/>
</dbReference>
<dbReference type="EMBL" id="AY459986">
    <property type="protein sequence ID" value="AAS16172.1"/>
    <property type="molecule type" value="Genomic_DNA"/>
</dbReference>
<dbReference type="EMBL" id="AY459987">
    <property type="protein sequence ID" value="AAS16173.1"/>
    <property type="molecule type" value="Genomic_DNA"/>
</dbReference>
<dbReference type="EMBL" id="AY459988">
    <property type="protein sequence ID" value="AAS16174.1"/>
    <property type="molecule type" value="Genomic_DNA"/>
</dbReference>
<dbReference type="EMBL" id="AY459989">
    <property type="protein sequence ID" value="AAS16175.1"/>
    <property type="molecule type" value="Genomic_DNA"/>
</dbReference>
<dbReference type="EMBL" id="AY459990">
    <property type="protein sequence ID" value="AAS16176.1"/>
    <property type="molecule type" value="Genomic_DNA"/>
</dbReference>
<dbReference type="EMBL" id="AY459991">
    <property type="protein sequence ID" value="AAS16177.1"/>
    <property type="molecule type" value="Genomic_DNA"/>
</dbReference>
<dbReference type="EMBL" id="AY459992">
    <property type="protein sequence ID" value="AAS16178.1"/>
    <property type="molecule type" value="Genomic_DNA"/>
</dbReference>
<dbReference type="EMBL" id="AY459993">
    <property type="protein sequence ID" value="AAS16179.1"/>
    <property type="molecule type" value="Genomic_DNA"/>
</dbReference>
<dbReference type="EMBL" id="AY459994">
    <property type="protein sequence ID" value="AAS16180.1"/>
    <property type="molecule type" value="Genomic_DNA"/>
</dbReference>
<dbReference type="EMBL" id="AY459995">
    <property type="protein sequence ID" value="AAS16181.1"/>
    <property type="molecule type" value="Genomic_DNA"/>
</dbReference>
<dbReference type="EMBL" id="AY459996">
    <property type="protein sequence ID" value="AAS16182.1"/>
    <property type="molecule type" value="Genomic_DNA"/>
</dbReference>
<dbReference type="EMBL" id="AY459997">
    <property type="protein sequence ID" value="AAS16183.1"/>
    <property type="molecule type" value="Genomic_DNA"/>
</dbReference>
<dbReference type="EMBL" id="AY459998">
    <property type="protein sequence ID" value="AAS16184.1"/>
    <property type="molecule type" value="Genomic_DNA"/>
</dbReference>
<dbReference type="EMBL" id="AY459999">
    <property type="protein sequence ID" value="AAS16185.1"/>
    <property type="molecule type" value="Genomic_DNA"/>
</dbReference>
<dbReference type="EMBL" id="AY460000">
    <property type="protein sequence ID" value="AAS16186.1"/>
    <property type="molecule type" value="Genomic_DNA"/>
</dbReference>
<dbReference type="EMBL" id="AY460001">
    <property type="protein sequence ID" value="AAS16187.1"/>
    <property type="molecule type" value="Genomic_DNA"/>
</dbReference>
<dbReference type="EMBL" id="AY460002">
    <property type="protein sequence ID" value="AAS16188.1"/>
    <property type="molecule type" value="Genomic_DNA"/>
</dbReference>
<dbReference type="EMBL" id="AY460003">
    <property type="protein sequence ID" value="AAS16189.1"/>
    <property type="molecule type" value="Genomic_DNA"/>
</dbReference>
<dbReference type="EMBL" id="AY460004">
    <property type="protein sequence ID" value="AAS16190.1"/>
    <property type="molecule type" value="Genomic_DNA"/>
</dbReference>
<dbReference type="EMBL" id="AY460005">
    <property type="protein sequence ID" value="AAS16191.1"/>
    <property type="molecule type" value="Genomic_DNA"/>
</dbReference>
<dbReference type="EMBL" id="AY460006">
    <property type="protein sequence ID" value="AAS16192.1"/>
    <property type="molecule type" value="Genomic_DNA"/>
</dbReference>
<dbReference type="EMBL" id="AY460007">
    <property type="protein sequence ID" value="AAS16193.1"/>
    <property type="molecule type" value="Genomic_DNA"/>
</dbReference>
<dbReference type="EMBL" id="AY460008">
    <property type="protein sequence ID" value="AAS16194.1"/>
    <property type="molecule type" value="Genomic_DNA"/>
</dbReference>
<dbReference type="EMBL" id="AY460009">
    <property type="protein sequence ID" value="AAS16195.1"/>
    <property type="molecule type" value="Genomic_DNA"/>
</dbReference>
<dbReference type="EMBL" id="AY460010">
    <property type="protein sequence ID" value="AAS16196.1"/>
    <property type="molecule type" value="Genomic_DNA"/>
</dbReference>
<dbReference type="EMBL" id="AY460011">
    <property type="protein sequence ID" value="AAS16197.1"/>
    <property type="molecule type" value="Genomic_DNA"/>
</dbReference>
<dbReference type="EMBL" id="AY460012">
    <property type="protein sequence ID" value="AAS16198.1"/>
    <property type="molecule type" value="Genomic_DNA"/>
</dbReference>
<dbReference type="EMBL" id="AY460013">
    <property type="protein sequence ID" value="AAS16199.1"/>
    <property type="molecule type" value="Genomic_DNA"/>
</dbReference>
<dbReference type="EMBL" id="AY460014">
    <property type="protein sequence ID" value="AAS16200.1"/>
    <property type="molecule type" value="Genomic_DNA"/>
</dbReference>
<dbReference type="EMBL" id="AY460015">
    <property type="protein sequence ID" value="AAS16201.1"/>
    <property type="molecule type" value="Genomic_DNA"/>
</dbReference>
<dbReference type="EMBL" id="AY460016">
    <property type="protein sequence ID" value="AAS16202.1"/>
    <property type="molecule type" value="Genomic_DNA"/>
</dbReference>
<dbReference type="EMBL" id="AY460017">
    <property type="protein sequence ID" value="AAS16203.1"/>
    <property type="molecule type" value="Genomic_DNA"/>
</dbReference>
<dbReference type="EMBL" id="AY460018">
    <property type="protein sequence ID" value="AAS16204.1"/>
    <property type="molecule type" value="Genomic_DNA"/>
</dbReference>
<dbReference type="EMBL" id="AY460019">
    <property type="protein sequence ID" value="AAS16205.1"/>
    <property type="molecule type" value="Genomic_DNA"/>
</dbReference>
<dbReference type="EMBL" id="AY460020">
    <property type="protein sequence ID" value="AAS16206.1"/>
    <property type="molecule type" value="Genomic_DNA"/>
</dbReference>
<dbReference type="EMBL" id="AY460021">
    <property type="protein sequence ID" value="AAS16207.1"/>
    <property type="molecule type" value="Genomic_DNA"/>
</dbReference>
<dbReference type="EMBL" id="AY460022">
    <property type="protein sequence ID" value="AAS16208.1"/>
    <property type="molecule type" value="Genomic_DNA"/>
</dbReference>
<dbReference type="EMBL" id="AY460023">
    <property type="protein sequence ID" value="AAS16209.1"/>
    <property type="molecule type" value="Genomic_DNA"/>
</dbReference>
<dbReference type="EMBL" id="AY460024">
    <property type="protein sequence ID" value="AAS16210.1"/>
    <property type="molecule type" value="Genomic_DNA"/>
</dbReference>
<dbReference type="EMBL" id="AY460025">
    <property type="protein sequence ID" value="AAS16211.1"/>
    <property type="molecule type" value="Genomic_DNA"/>
</dbReference>
<dbReference type="EMBL" id="AY460026">
    <property type="protein sequence ID" value="AAS16212.1"/>
    <property type="molecule type" value="Genomic_DNA"/>
</dbReference>
<dbReference type="EMBL" id="AY460027">
    <property type="protein sequence ID" value="AAS16213.1"/>
    <property type="molecule type" value="Genomic_DNA"/>
</dbReference>
<dbReference type="EMBL" id="AY460028">
    <property type="protein sequence ID" value="AAS16214.1"/>
    <property type="molecule type" value="Genomic_DNA"/>
</dbReference>
<dbReference type="EMBL" id="AY460029">
    <property type="protein sequence ID" value="AAS16215.1"/>
    <property type="molecule type" value="Genomic_DNA"/>
</dbReference>
<dbReference type="EMBL" id="AY460030">
    <property type="protein sequence ID" value="AAS16216.1"/>
    <property type="molecule type" value="Genomic_DNA"/>
</dbReference>
<dbReference type="EMBL" id="AY460031">
    <property type="protein sequence ID" value="AAS16217.1"/>
    <property type="molecule type" value="Genomic_DNA"/>
</dbReference>
<dbReference type="EMBL" id="AY460032">
    <property type="protein sequence ID" value="AAS16218.1"/>
    <property type="molecule type" value="Genomic_DNA"/>
</dbReference>
<dbReference type="EMBL" id="AY460033">
    <property type="protein sequence ID" value="AAS16219.1"/>
    <property type="molecule type" value="Genomic_DNA"/>
</dbReference>
<dbReference type="EMBL" id="AY460034">
    <property type="protein sequence ID" value="AAS16220.1"/>
    <property type="molecule type" value="Genomic_DNA"/>
</dbReference>
<dbReference type="EMBL" id="AY460035">
    <property type="protein sequence ID" value="AAS16221.1"/>
    <property type="molecule type" value="Genomic_DNA"/>
</dbReference>
<dbReference type="EMBL" id="AY460036">
    <property type="protein sequence ID" value="AAS16222.1"/>
    <property type="molecule type" value="Genomic_DNA"/>
</dbReference>
<dbReference type="EMBL" id="AY460037">
    <property type="protein sequence ID" value="AAS16223.1"/>
    <property type="molecule type" value="Genomic_DNA"/>
</dbReference>
<dbReference type="EMBL" id="AY460038">
    <property type="protein sequence ID" value="AAS16224.1"/>
    <property type="molecule type" value="Genomic_DNA"/>
</dbReference>
<dbReference type="EMBL" id="AY460039">
    <property type="protein sequence ID" value="AAS16225.1"/>
    <property type="molecule type" value="Genomic_DNA"/>
</dbReference>
<dbReference type="EMBL" id="AY460040">
    <property type="protein sequence ID" value="AAS16226.1"/>
    <property type="molecule type" value="Genomic_DNA"/>
</dbReference>
<dbReference type="EMBL" id="AY460041">
    <property type="protein sequence ID" value="AAS16227.1"/>
    <property type="molecule type" value="Genomic_DNA"/>
</dbReference>
<dbReference type="EMBL" id="AY460042">
    <property type="protein sequence ID" value="AAS16228.1"/>
    <property type="molecule type" value="Genomic_DNA"/>
</dbReference>
<dbReference type="EMBL" id="AY460043">
    <property type="protein sequence ID" value="AAS16229.1"/>
    <property type="molecule type" value="Genomic_DNA"/>
</dbReference>
<dbReference type="EMBL" id="AY460044">
    <property type="protein sequence ID" value="AAS16230.1"/>
    <property type="molecule type" value="Genomic_DNA"/>
</dbReference>
<dbReference type="EMBL" id="AY460045">
    <property type="protein sequence ID" value="AAS16231.1"/>
    <property type="molecule type" value="Genomic_DNA"/>
</dbReference>
<dbReference type="EMBL" id="AY460046">
    <property type="protein sequence ID" value="AAS16232.1"/>
    <property type="molecule type" value="Genomic_DNA"/>
</dbReference>
<dbReference type="EMBL" id="AY460047">
    <property type="protein sequence ID" value="AAS16233.1"/>
    <property type="molecule type" value="Genomic_DNA"/>
</dbReference>
<dbReference type="EMBL" id="AY460048">
    <property type="protein sequence ID" value="AAS16234.1"/>
    <property type="molecule type" value="Genomic_DNA"/>
</dbReference>
<dbReference type="EMBL" id="AY460049">
    <property type="protein sequence ID" value="AAS16235.1"/>
    <property type="molecule type" value="Genomic_DNA"/>
</dbReference>
<dbReference type="EMBL" id="AY460050">
    <property type="protein sequence ID" value="AAS16236.1"/>
    <property type="molecule type" value="Genomic_DNA"/>
</dbReference>
<dbReference type="EMBL" id="AY460051">
    <property type="protein sequence ID" value="AAS16237.1"/>
    <property type="molecule type" value="Genomic_DNA"/>
</dbReference>
<dbReference type="EMBL" id="AY460052">
    <property type="protein sequence ID" value="AAS16238.1"/>
    <property type="molecule type" value="Genomic_DNA"/>
</dbReference>
<dbReference type="EMBL" id="AY460053">
    <property type="protein sequence ID" value="AAS16239.1"/>
    <property type="molecule type" value="Genomic_DNA"/>
</dbReference>
<dbReference type="EMBL" id="AY460054">
    <property type="protein sequence ID" value="AAS16240.1"/>
    <property type="molecule type" value="Genomic_DNA"/>
</dbReference>
<dbReference type="EMBL" id="AY460055">
    <property type="protein sequence ID" value="AAS16241.1"/>
    <property type="molecule type" value="Genomic_DNA"/>
</dbReference>
<dbReference type="EMBL" id="AY460056">
    <property type="protein sequence ID" value="AAS16242.1"/>
    <property type="molecule type" value="Genomic_DNA"/>
</dbReference>
<dbReference type="EMBL" id="AY460057">
    <property type="protein sequence ID" value="AAS16243.1"/>
    <property type="molecule type" value="Genomic_DNA"/>
</dbReference>
<dbReference type="EMBL" id="AY460058">
    <property type="protein sequence ID" value="AAS16244.1"/>
    <property type="molecule type" value="Genomic_DNA"/>
</dbReference>
<dbReference type="EMBL" id="AY460059">
    <property type="protein sequence ID" value="AAS16245.1"/>
    <property type="molecule type" value="Genomic_DNA"/>
</dbReference>
<dbReference type="EMBL" id="AY460060">
    <property type="protein sequence ID" value="AAS16246.1"/>
    <property type="molecule type" value="Genomic_DNA"/>
</dbReference>
<dbReference type="EMBL" id="AY460061">
    <property type="protein sequence ID" value="AAS16247.1"/>
    <property type="molecule type" value="Genomic_DNA"/>
</dbReference>
<dbReference type="EMBL" id="AY460062">
    <property type="protein sequence ID" value="AAS16248.1"/>
    <property type="molecule type" value="Genomic_DNA"/>
</dbReference>
<dbReference type="EMBL" id="AY460063">
    <property type="protein sequence ID" value="AAS16249.1"/>
    <property type="molecule type" value="Genomic_DNA"/>
</dbReference>
<dbReference type="EMBL" id="AY460064">
    <property type="protein sequence ID" value="AAS16250.1"/>
    <property type="molecule type" value="Genomic_DNA"/>
</dbReference>
<dbReference type="EMBL" id="AY460065">
    <property type="protein sequence ID" value="AAS16251.1"/>
    <property type="molecule type" value="Genomic_DNA"/>
</dbReference>
<dbReference type="EMBL" id="AY460066">
    <property type="protein sequence ID" value="AAS16252.1"/>
    <property type="molecule type" value="Genomic_DNA"/>
</dbReference>
<dbReference type="EMBL" id="AY460067">
    <property type="protein sequence ID" value="AAS16253.1"/>
    <property type="molecule type" value="Genomic_DNA"/>
</dbReference>
<dbReference type="EMBL" id="AY460068">
    <property type="protein sequence ID" value="AAS16254.1"/>
    <property type="molecule type" value="Genomic_DNA"/>
</dbReference>
<dbReference type="EMBL" id="AY460069">
    <property type="protein sequence ID" value="AAS16255.1"/>
    <property type="molecule type" value="Genomic_DNA"/>
</dbReference>
<dbReference type="EMBL" id="AY460070">
    <property type="protein sequence ID" value="AAS16256.1"/>
    <property type="molecule type" value="Genomic_DNA"/>
</dbReference>
<dbReference type="EMBL" id="AY460071">
    <property type="protein sequence ID" value="AAS16257.1"/>
    <property type="molecule type" value="Genomic_DNA"/>
</dbReference>
<dbReference type="EMBL" id="AY460072">
    <property type="protein sequence ID" value="AAS16258.1"/>
    <property type="molecule type" value="Genomic_DNA"/>
</dbReference>
<dbReference type="EMBL" id="AY460073">
    <property type="protein sequence ID" value="AAS16259.1"/>
    <property type="molecule type" value="Genomic_DNA"/>
</dbReference>
<dbReference type="EMBL" id="AY460074">
    <property type="protein sequence ID" value="AAS16260.1"/>
    <property type="molecule type" value="Genomic_DNA"/>
</dbReference>
<dbReference type="EMBL" id="AY460075">
    <property type="protein sequence ID" value="AAS16261.1"/>
    <property type="molecule type" value="Genomic_DNA"/>
</dbReference>
<dbReference type="PIR" id="A36392">
    <property type="entry name" value="A36392"/>
</dbReference>
<dbReference type="RefSeq" id="NP_001285501.1">
    <property type="nucleotide sequence ID" value="NM_001298572.1"/>
</dbReference>
<dbReference type="RefSeq" id="NP_523424.2">
    <property type="nucleotide sequence ID" value="NM_078700.4"/>
</dbReference>
<dbReference type="SMR" id="P22814"/>
<dbReference type="BioGRID" id="59347">
    <property type="interactions" value="22"/>
</dbReference>
<dbReference type="ELM" id="P22814"/>
<dbReference type="FunCoup" id="P22814">
    <property type="interactions" value="84"/>
</dbReference>
<dbReference type="IntAct" id="P22814">
    <property type="interactions" value="7"/>
</dbReference>
<dbReference type="STRING" id="7227.FBpp0311837"/>
<dbReference type="PaxDb" id="7227-FBpp0076971"/>
<dbReference type="DNASU" id="33059"/>
<dbReference type="EnsemblMetazoa" id="FBtr0077279">
    <property type="protein sequence ID" value="FBpp0076971"/>
    <property type="gene ID" value="FBgn0003300"/>
</dbReference>
<dbReference type="EnsemblMetazoa" id="FBtr0345922">
    <property type="protein sequence ID" value="FBpp0311837"/>
    <property type="gene ID" value="FBgn0003300"/>
</dbReference>
<dbReference type="GeneID" id="33059"/>
<dbReference type="KEGG" id="dme:Dmel_CG1849"/>
<dbReference type="AGR" id="FB:FBgn0003300"/>
<dbReference type="CTD" id="33059"/>
<dbReference type="FlyBase" id="FBgn0003300">
    <property type="gene designation" value="run"/>
</dbReference>
<dbReference type="VEuPathDB" id="VectorBase:FBgn0003300"/>
<dbReference type="eggNOG" id="KOG3982">
    <property type="taxonomic scope" value="Eukaryota"/>
</dbReference>
<dbReference type="HOGENOM" id="CLU_041058_1_0_1"/>
<dbReference type="InParanoid" id="P22814"/>
<dbReference type="OMA" id="TPYAMPQ"/>
<dbReference type="OrthoDB" id="10029800at2759"/>
<dbReference type="PhylomeDB" id="P22814"/>
<dbReference type="Reactome" id="R-DME-549127">
    <property type="pathway name" value="Organic cation transport"/>
</dbReference>
<dbReference type="Reactome" id="R-DME-8877330">
    <property type="pathway name" value="RUNX1 and FOXP3 control the development of regulatory T lymphocytes (Tregs)"/>
</dbReference>
<dbReference type="Reactome" id="R-DME-8878166">
    <property type="pathway name" value="Transcriptional regulation by RUNX2"/>
</dbReference>
<dbReference type="Reactome" id="R-DME-8931987">
    <property type="pathway name" value="RUNX1 regulates estrogen receptor mediated transcription"/>
</dbReference>
<dbReference type="Reactome" id="R-DME-8934593">
    <property type="pathway name" value="Regulation of RUNX1 Expression and Activity"/>
</dbReference>
<dbReference type="Reactome" id="R-DME-8936459">
    <property type="pathway name" value="RUNX1 regulates genes involved in megakaryocyte differentiation and platelet function"/>
</dbReference>
<dbReference type="Reactome" id="R-DME-8939236">
    <property type="pathway name" value="RUNX1 regulates transcription of genes involved in differentiation of HSCs"/>
</dbReference>
<dbReference type="Reactome" id="R-DME-8939243">
    <property type="pathway name" value="RUNX1 interacts with co-factors whose precise effect on RUNX1 targets is not known"/>
</dbReference>
<dbReference type="Reactome" id="R-DME-8939245">
    <property type="pathway name" value="RUNX1 regulates transcription of genes involved in BCR signaling"/>
</dbReference>
<dbReference type="Reactome" id="R-DME-8939246">
    <property type="pathway name" value="RUNX1 regulates transcription of genes involved in differentiation of myeloid cells"/>
</dbReference>
<dbReference type="Reactome" id="R-DME-8939247">
    <property type="pathway name" value="RUNX1 regulates transcription of genes involved in interleukin signaling"/>
</dbReference>
<dbReference type="Reactome" id="R-DME-8939902">
    <property type="pathway name" value="Regulation of RUNX2 expression and activity"/>
</dbReference>
<dbReference type="Reactome" id="R-DME-8940973">
    <property type="pathway name" value="RUNX2 regulates osteoblast differentiation"/>
</dbReference>
<dbReference type="Reactome" id="R-DME-8941326">
    <property type="pathway name" value="RUNX2 regulates bone development"/>
</dbReference>
<dbReference type="Reactome" id="R-DME-8941855">
    <property type="pathway name" value="RUNX3 regulates CDKN1A transcription"/>
</dbReference>
<dbReference type="Reactome" id="R-DME-8941858">
    <property type="pathway name" value="Regulation of RUNX3 expression and activity"/>
</dbReference>
<dbReference type="Reactome" id="R-DME-8951430">
    <property type="pathway name" value="RUNX3 regulates WNT signaling"/>
</dbReference>
<dbReference type="Reactome" id="R-DME-8951936">
    <property type="pathway name" value="RUNX3 regulates p14-ARF"/>
</dbReference>
<dbReference type="Reactome" id="R-DME-9018519">
    <property type="pathway name" value="Estrogen-dependent gene expression"/>
</dbReference>
<dbReference type="SignaLink" id="P22814"/>
<dbReference type="BioGRID-ORCS" id="33059">
    <property type="hits" value="0 hits in 3 CRISPR screens"/>
</dbReference>
<dbReference type="ChiTaRS" id="run">
    <property type="organism name" value="fly"/>
</dbReference>
<dbReference type="GenomeRNAi" id="33059"/>
<dbReference type="PRO" id="PR:P22814"/>
<dbReference type="Proteomes" id="UP000000803">
    <property type="component" value="Chromosome X"/>
</dbReference>
<dbReference type="Bgee" id="FBgn0003300">
    <property type="expression patterns" value="Expressed in Johnston organ neuron (Drosophila) in antenna and 49 other cell types or tissues"/>
</dbReference>
<dbReference type="ExpressionAtlas" id="P22814">
    <property type="expression patterns" value="baseline and differential"/>
</dbReference>
<dbReference type="GO" id="GO:0005634">
    <property type="term" value="C:nucleus"/>
    <property type="evidence" value="ECO:0000314"/>
    <property type="project" value="FlyBase"/>
</dbReference>
<dbReference type="GO" id="GO:0005524">
    <property type="term" value="F:ATP binding"/>
    <property type="evidence" value="ECO:0007669"/>
    <property type="project" value="InterPro"/>
</dbReference>
<dbReference type="GO" id="GO:0003700">
    <property type="term" value="F:DNA-binding transcription factor activity"/>
    <property type="evidence" value="ECO:0000314"/>
    <property type="project" value="FlyBase"/>
</dbReference>
<dbReference type="GO" id="GO:0000981">
    <property type="term" value="F:DNA-binding transcription factor activity, RNA polymerase II-specific"/>
    <property type="evidence" value="ECO:0000318"/>
    <property type="project" value="GO_Central"/>
</dbReference>
<dbReference type="GO" id="GO:0000978">
    <property type="term" value="F:RNA polymerase II cis-regulatory region sequence-specific DNA binding"/>
    <property type="evidence" value="ECO:0000318"/>
    <property type="project" value="GO_Central"/>
</dbReference>
<dbReference type="GO" id="GO:0043565">
    <property type="term" value="F:sequence-specific DNA binding"/>
    <property type="evidence" value="ECO:0000314"/>
    <property type="project" value="FlyBase"/>
</dbReference>
<dbReference type="GO" id="GO:0007411">
    <property type="term" value="P:axon guidance"/>
    <property type="evidence" value="ECO:0000315"/>
    <property type="project" value="FlyBase"/>
</dbReference>
<dbReference type="GO" id="GO:0048592">
    <property type="term" value="P:eye morphogenesis"/>
    <property type="evidence" value="ECO:0000315"/>
    <property type="project" value="FlyBase"/>
</dbReference>
<dbReference type="GO" id="GO:0007377">
    <property type="term" value="P:germ-band extension"/>
    <property type="evidence" value="ECO:0000315"/>
    <property type="project" value="FlyBase"/>
</dbReference>
<dbReference type="GO" id="GO:0045892">
    <property type="term" value="P:negative regulation of DNA-templated transcription"/>
    <property type="evidence" value="ECO:0000315"/>
    <property type="project" value="FlyBase"/>
</dbReference>
<dbReference type="GO" id="GO:0007400">
    <property type="term" value="P:neuroblast fate determination"/>
    <property type="evidence" value="ECO:0000304"/>
    <property type="project" value="FlyBase"/>
</dbReference>
<dbReference type="GO" id="GO:0007366">
    <property type="term" value="P:periodic partitioning by pair rule gene"/>
    <property type="evidence" value="ECO:0000304"/>
    <property type="project" value="FlyBase"/>
</dbReference>
<dbReference type="GO" id="GO:0045893">
    <property type="term" value="P:positive regulation of DNA-templated transcription"/>
    <property type="evidence" value="ECO:0000314"/>
    <property type="project" value="FlyBase"/>
</dbReference>
<dbReference type="GO" id="GO:0045944">
    <property type="term" value="P:positive regulation of transcription by RNA polymerase II"/>
    <property type="evidence" value="ECO:0000314"/>
    <property type="project" value="FlyBase"/>
</dbReference>
<dbReference type="GO" id="GO:0007367">
    <property type="term" value="P:segment polarity determination"/>
    <property type="evidence" value="ECO:0007669"/>
    <property type="project" value="UniProtKB-KW"/>
</dbReference>
<dbReference type="GO" id="GO:0007540">
    <property type="term" value="P:sex determination, establishment of X:A ratio"/>
    <property type="evidence" value="ECO:0000304"/>
    <property type="project" value="FlyBase"/>
</dbReference>
<dbReference type="GO" id="GO:0007419">
    <property type="term" value="P:ventral cord development"/>
    <property type="evidence" value="ECO:0000304"/>
    <property type="project" value="FlyBase"/>
</dbReference>
<dbReference type="FunFam" id="2.60.40.720:FF:000001">
    <property type="entry name" value="Runt-related transcription factor"/>
    <property type="match status" value="1"/>
</dbReference>
<dbReference type="Gene3D" id="2.60.40.720">
    <property type="match status" value="1"/>
</dbReference>
<dbReference type="InterPro" id="IPR000040">
    <property type="entry name" value="AML1_Runt"/>
</dbReference>
<dbReference type="InterPro" id="IPR008967">
    <property type="entry name" value="p53-like_TF_DNA-bd_sf"/>
</dbReference>
<dbReference type="InterPro" id="IPR012346">
    <property type="entry name" value="p53/RUNT-type_TF_DNA-bd_sf"/>
</dbReference>
<dbReference type="InterPro" id="IPR013524">
    <property type="entry name" value="Runt_dom"/>
</dbReference>
<dbReference type="PANTHER" id="PTHR11950">
    <property type="entry name" value="RUNT RELATED"/>
    <property type="match status" value="1"/>
</dbReference>
<dbReference type="PANTHER" id="PTHR11950:SF31">
    <property type="entry name" value="SEGMENTATION PROTEIN RUNT"/>
    <property type="match status" value="1"/>
</dbReference>
<dbReference type="Pfam" id="PF00853">
    <property type="entry name" value="Runt"/>
    <property type="match status" value="1"/>
</dbReference>
<dbReference type="PRINTS" id="PR00967">
    <property type="entry name" value="ONCOGENEAML1"/>
</dbReference>
<dbReference type="SUPFAM" id="SSF49417">
    <property type="entry name" value="p53-like transcription factors"/>
    <property type="match status" value="1"/>
</dbReference>
<dbReference type="PROSITE" id="PS51062">
    <property type="entry name" value="RUNT"/>
    <property type="match status" value="1"/>
</dbReference>
<protein>
    <recommendedName>
        <fullName>Segmentation protein Runt</fullName>
    </recommendedName>
</protein>
<evidence type="ECO:0000255" key="1">
    <source>
        <dbReference type="PROSITE-ProRule" id="PRU00399"/>
    </source>
</evidence>
<evidence type="ECO:0000256" key="2">
    <source>
        <dbReference type="SAM" id="MobiDB-lite"/>
    </source>
</evidence>
<evidence type="ECO:0000269" key="3">
    <source>
    </source>
</evidence>
<evidence type="ECO:0000305" key="4"/>
<name>RUNT_DROME</name>